<feature type="chain" id="PRO_1000147861" description="Rhomboid protease GlpG">
    <location>
        <begin position="1"/>
        <end position="276"/>
    </location>
</feature>
<feature type="transmembrane region" description="Helical" evidence="1">
    <location>
        <begin position="94"/>
        <end position="114"/>
    </location>
</feature>
<feature type="transmembrane region" description="Helical" evidence="1">
    <location>
        <begin position="142"/>
        <end position="162"/>
    </location>
</feature>
<feature type="transmembrane region" description="Helical" evidence="1">
    <location>
        <begin position="169"/>
        <end position="189"/>
    </location>
</feature>
<feature type="transmembrane region" description="Helical" evidence="1">
    <location>
        <begin position="192"/>
        <end position="212"/>
    </location>
</feature>
<feature type="transmembrane region" description="Helical" evidence="1">
    <location>
        <begin position="229"/>
        <end position="249"/>
    </location>
</feature>
<feature type="transmembrane region" description="Helical" evidence="1">
    <location>
        <begin position="252"/>
        <end position="272"/>
    </location>
</feature>
<feature type="active site" description="Nucleophile" evidence="1">
    <location>
        <position position="201"/>
    </location>
</feature>
<feature type="active site" evidence="1">
    <location>
        <position position="254"/>
    </location>
</feature>
<organism>
    <name type="scientific">Klebsiella pneumoniae (strain 342)</name>
    <dbReference type="NCBI Taxonomy" id="507522"/>
    <lineage>
        <taxon>Bacteria</taxon>
        <taxon>Pseudomonadati</taxon>
        <taxon>Pseudomonadota</taxon>
        <taxon>Gammaproteobacteria</taxon>
        <taxon>Enterobacterales</taxon>
        <taxon>Enterobacteriaceae</taxon>
        <taxon>Klebsiella/Raoultella group</taxon>
        <taxon>Klebsiella</taxon>
        <taxon>Klebsiella pneumoniae complex</taxon>
    </lineage>
</organism>
<keyword id="KW-0997">Cell inner membrane</keyword>
<keyword id="KW-1003">Cell membrane</keyword>
<keyword id="KW-0378">Hydrolase</keyword>
<keyword id="KW-0472">Membrane</keyword>
<keyword id="KW-0645">Protease</keyword>
<keyword id="KW-0720">Serine protease</keyword>
<keyword id="KW-0812">Transmembrane</keyword>
<keyword id="KW-1133">Transmembrane helix</keyword>
<dbReference type="EC" id="3.4.21.105" evidence="1"/>
<dbReference type="EMBL" id="CP000964">
    <property type="protein sequence ID" value="ACI08161.1"/>
    <property type="molecule type" value="Genomic_DNA"/>
</dbReference>
<dbReference type="SMR" id="B5XTR5"/>
<dbReference type="MEROPS" id="S54.016"/>
<dbReference type="KEGG" id="kpe:KPK_0324"/>
<dbReference type="HOGENOM" id="CLU_058989_0_0_6"/>
<dbReference type="Proteomes" id="UP000001734">
    <property type="component" value="Chromosome"/>
</dbReference>
<dbReference type="GO" id="GO:0005886">
    <property type="term" value="C:plasma membrane"/>
    <property type="evidence" value="ECO:0007669"/>
    <property type="project" value="UniProtKB-SubCell"/>
</dbReference>
<dbReference type="GO" id="GO:0004252">
    <property type="term" value="F:serine-type endopeptidase activity"/>
    <property type="evidence" value="ECO:0007669"/>
    <property type="project" value="UniProtKB-UniRule"/>
</dbReference>
<dbReference type="GO" id="GO:0006508">
    <property type="term" value="P:proteolysis"/>
    <property type="evidence" value="ECO:0007669"/>
    <property type="project" value="UniProtKB-UniRule"/>
</dbReference>
<dbReference type="FunFam" id="1.20.1540.10:FF:000003">
    <property type="entry name" value="Rhomboid protease GlpG"/>
    <property type="match status" value="1"/>
</dbReference>
<dbReference type="FunFam" id="3.30.70.2350:FF:000001">
    <property type="entry name" value="Rhomboid protease GlpG"/>
    <property type="match status" value="1"/>
</dbReference>
<dbReference type="Gene3D" id="3.30.70.2350">
    <property type="match status" value="1"/>
</dbReference>
<dbReference type="Gene3D" id="1.20.1540.10">
    <property type="entry name" value="Rhomboid-like"/>
    <property type="match status" value="1"/>
</dbReference>
<dbReference type="HAMAP" id="MF_01594">
    <property type="entry name" value="Rhomboid_GlpG"/>
    <property type="match status" value="1"/>
</dbReference>
<dbReference type="InterPro" id="IPR038236">
    <property type="entry name" value="GlpG_N_sf"/>
</dbReference>
<dbReference type="InterPro" id="IPR022732">
    <property type="entry name" value="Peptidase_S54_GlpG_N"/>
</dbReference>
<dbReference type="InterPro" id="IPR022764">
    <property type="entry name" value="Peptidase_S54_rhomboid_dom"/>
</dbReference>
<dbReference type="InterPro" id="IPR035952">
    <property type="entry name" value="Rhomboid-like_sf"/>
</dbReference>
<dbReference type="InterPro" id="IPR023662">
    <property type="entry name" value="Rhomboid_protease_GlpG"/>
</dbReference>
<dbReference type="NCBIfam" id="NF008155">
    <property type="entry name" value="PRK10907.1"/>
    <property type="match status" value="1"/>
</dbReference>
<dbReference type="NCBIfam" id="TIGR04239">
    <property type="entry name" value="rhombo_GlpG"/>
    <property type="match status" value="1"/>
</dbReference>
<dbReference type="PANTHER" id="PTHR43066:SF26">
    <property type="entry name" value="RHOMBOID PROTEASE GLPG"/>
    <property type="match status" value="1"/>
</dbReference>
<dbReference type="PANTHER" id="PTHR43066">
    <property type="entry name" value="RHOMBOID-RELATED PROTEIN"/>
    <property type="match status" value="1"/>
</dbReference>
<dbReference type="Pfam" id="PF01694">
    <property type="entry name" value="Rhomboid"/>
    <property type="match status" value="1"/>
</dbReference>
<dbReference type="Pfam" id="PF12122">
    <property type="entry name" value="Rhomboid_N"/>
    <property type="match status" value="1"/>
</dbReference>
<dbReference type="SUPFAM" id="SSF144091">
    <property type="entry name" value="Rhomboid-like"/>
    <property type="match status" value="1"/>
</dbReference>
<proteinExistence type="inferred from homology"/>
<sequence>MLMITSFANPRVAQAFVDYMATQGIILTIQQHAQSDVWLADESQAGRVRAELARFLENPADPRYLAASWQSGQTNSGLRYQRFPFFATLRHNAGPFTWAILLICIAVFILQNLLGDQPVMIWLAWPYDPSLQFEAWRYFSHAFMHFSLMHILFNLLWWWYLGGAVEKRIGSGKLVVITVISALLSGFVQHQFSGPWFGGLSGVVYALMGYVWLRGERDPQSGIYLQRGLILFSLVWLIAGWFDVFGMAIANGAHVAGLATGLAMAFVDTLHGRKRA</sequence>
<reference key="1">
    <citation type="journal article" date="2008" name="PLoS Genet.">
        <title>Complete genome sequence of the N2-fixing broad host range endophyte Klebsiella pneumoniae 342 and virulence predictions verified in mice.</title>
        <authorList>
            <person name="Fouts D.E."/>
            <person name="Tyler H.L."/>
            <person name="DeBoy R.T."/>
            <person name="Daugherty S."/>
            <person name="Ren Q."/>
            <person name="Badger J.H."/>
            <person name="Durkin A.S."/>
            <person name="Huot H."/>
            <person name="Shrivastava S."/>
            <person name="Kothari S."/>
            <person name="Dodson R.J."/>
            <person name="Mohamoud Y."/>
            <person name="Khouri H."/>
            <person name="Roesch L.F.W."/>
            <person name="Krogfelt K.A."/>
            <person name="Struve C."/>
            <person name="Triplett E.W."/>
            <person name="Methe B.A."/>
        </authorList>
    </citation>
    <scope>NUCLEOTIDE SEQUENCE [LARGE SCALE GENOMIC DNA]</scope>
    <source>
        <strain>342</strain>
    </source>
</reference>
<comment type="function">
    <text evidence="1">Rhomboid-type serine protease that catalyzes intramembrane proteolysis.</text>
</comment>
<comment type="catalytic activity">
    <reaction evidence="1">
        <text>Cleaves type-1 transmembrane domains using a catalytic dyad composed of serine and histidine that are contributed by different transmembrane domains.</text>
        <dbReference type="EC" id="3.4.21.105"/>
    </reaction>
</comment>
<comment type="subcellular location">
    <subcellularLocation>
        <location evidence="1">Cell inner membrane</location>
        <topology evidence="1">Multi-pass membrane protein</topology>
    </subcellularLocation>
</comment>
<comment type="similarity">
    <text evidence="1">Belongs to the peptidase S54 family.</text>
</comment>
<gene>
    <name evidence="1" type="primary">glpG</name>
    <name type="ordered locus">KPK_0324</name>
</gene>
<name>GLPG_KLEP3</name>
<accession>B5XTR5</accession>
<protein>
    <recommendedName>
        <fullName evidence="1">Rhomboid protease GlpG</fullName>
        <ecNumber evidence="1">3.4.21.105</ecNumber>
    </recommendedName>
    <alternativeName>
        <fullName evidence="1">Intramembrane serine protease</fullName>
    </alternativeName>
</protein>
<evidence type="ECO:0000255" key="1">
    <source>
        <dbReference type="HAMAP-Rule" id="MF_01594"/>
    </source>
</evidence>